<organism>
    <name type="scientific">Bacillus anthracis (strain A0248)</name>
    <dbReference type="NCBI Taxonomy" id="592021"/>
    <lineage>
        <taxon>Bacteria</taxon>
        <taxon>Bacillati</taxon>
        <taxon>Bacillota</taxon>
        <taxon>Bacilli</taxon>
        <taxon>Bacillales</taxon>
        <taxon>Bacillaceae</taxon>
        <taxon>Bacillus</taxon>
        <taxon>Bacillus cereus group</taxon>
    </lineage>
</organism>
<feature type="chain" id="PRO_1000164557" description="Orotidine 5'-phosphate decarboxylase">
    <location>
        <begin position="1"/>
        <end position="238"/>
    </location>
</feature>
<feature type="active site" description="Proton donor" evidence="1">
    <location>
        <position position="61"/>
    </location>
</feature>
<feature type="binding site" evidence="1">
    <location>
        <position position="10"/>
    </location>
    <ligand>
        <name>substrate</name>
    </ligand>
</feature>
<feature type="binding site" evidence="1">
    <location>
        <position position="32"/>
    </location>
    <ligand>
        <name>substrate</name>
    </ligand>
</feature>
<feature type="binding site" evidence="1">
    <location>
        <begin position="59"/>
        <end position="68"/>
    </location>
    <ligand>
        <name>substrate</name>
    </ligand>
</feature>
<feature type="binding site" evidence="1">
    <location>
        <position position="122"/>
    </location>
    <ligand>
        <name>substrate</name>
    </ligand>
</feature>
<feature type="binding site" evidence="1">
    <location>
        <position position="184"/>
    </location>
    <ligand>
        <name>substrate</name>
    </ligand>
</feature>
<feature type="binding site" evidence="1">
    <location>
        <position position="193"/>
    </location>
    <ligand>
        <name>substrate</name>
    </ligand>
</feature>
<feature type="binding site" evidence="1">
    <location>
        <position position="213"/>
    </location>
    <ligand>
        <name>substrate</name>
    </ligand>
</feature>
<feature type="binding site" evidence="1">
    <location>
        <position position="214"/>
    </location>
    <ligand>
        <name>substrate</name>
    </ligand>
</feature>
<proteinExistence type="inferred from homology"/>
<sequence>MSQSLIVALDFPGKQDVEQFLRHFEGEELFVKVGMELFYKEGPAIITYLKEKGHKIFLDLKLHDIPNTVKSAMRSLASLDVDMVNVHAGGGSSMMKAAIEGLEEGKQEGKERPICIAVTQLTSTSETMMKKEIGIEKTLEEAVAHYAKLTKESGLDGVVCSTLEVPKLREVCGSEFVTVTPGIRLASDDVNDQVRVATPKRARELGSSYIVVGRSITKAENPLEAYKTVKQQWEGVTV</sequence>
<name>PYRF_BACAA</name>
<evidence type="ECO:0000255" key="1">
    <source>
        <dbReference type="HAMAP-Rule" id="MF_01200"/>
    </source>
</evidence>
<keyword id="KW-0210">Decarboxylase</keyword>
<keyword id="KW-0456">Lyase</keyword>
<keyword id="KW-0665">Pyrimidine biosynthesis</keyword>
<dbReference type="EC" id="4.1.1.23" evidence="1"/>
<dbReference type="EMBL" id="CP001598">
    <property type="protein sequence ID" value="ACQ49341.1"/>
    <property type="molecule type" value="Genomic_DNA"/>
</dbReference>
<dbReference type="RefSeq" id="WP_000083503.1">
    <property type="nucleotide sequence ID" value="NC_012659.1"/>
</dbReference>
<dbReference type="SMR" id="C3P653"/>
<dbReference type="GeneID" id="45023712"/>
<dbReference type="KEGG" id="bai:BAA_4045"/>
<dbReference type="HOGENOM" id="CLU_067069_1_1_9"/>
<dbReference type="UniPathway" id="UPA00070">
    <property type="reaction ID" value="UER00120"/>
</dbReference>
<dbReference type="GO" id="GO:0005829">
    <property type="term" value="C:cytosol"/>
    <property type="evidence" value="ECO:0007669"/>
    <property type="project" value="TreeGrafter"/>
</dbReference>
<dbReference type="GO" id="GO:0004590">
    <property type="term" value="F:orotidine-5'-phosphate decarboxylase activity"/>
    <property type="evidence" value="ECO:0007669"/>
    <property type="project" value="UniProtKB-UniRule"/>
</dbReference>
<dbReference type="GO" id="GO:0006207">
    <property type="term" value="P:'de novo' pyrimidine nucleobase biosynthetic process"/>
    <property type="evidence" value="ECO:0007669"/>
    <property type="project" value="InterPro"/>
</dbReference>
<dbReference type="GO" id="GO:0044205">
    <property type="term" value="P:'de novo' UMP biosynthetic process"/>
    <property type="evidence" value="ECO:0007669"/>
    <property type="project" value="UniProtKB-UniRule"/>
</dbReference>
<dbReference type="CDD" id="cd04725">
    <property type="entry name" value="OMP_decarboxylase_like"/>
    <property type="match status" value="1"/>
</dbReference>
<dbReference type="FunFam" id="3.20.20.70:FF:000015">
    <property type="entry name" value="Orotidine 5'-phosphate decarboxylase"/>
    <property type="match status" value="1"/>
</dbReference>
<dbReference type="Gene3D" id="3.20.20.70">
    <property type="entry name" value="Aldolase class I"/>
    <property type="match status" value="1"/>
</dbReference>
<dbReference type="HAMAP" id="MF_01200_B">
    <property type="entry name" value="OMPdecase_type1_B"/>
    <property type="match status" value="1"/>
</dbReference>
<dbReference type="InterPro" id="IPR013785">
    <property type="entry name" value="Aldolase_TIM"/>
</dbReference>
<dbReference type="InterPro" id="IPR014732">
    <property type="entry name" value="OMPdecase"/>
</dbReference>
<dbReference type="InterPro" id="IPR018089">
    <property type="entry name" value="OMPdecase_AS"/>
</dbReference>
<dbReference type="InterPro" id="IPR047596">
    <property type="entry name" value="OMPdecase_bac"/>
</dbReference>
<dbReference type="InterPro" id="IPR001754">
    <property type="entry name" value="OMPdeCOase_dom"/>
</dbReference>
<dbReference type="InterPro" id="IPR011060">
    <property type="entry name" value="RibuloseP-bd_barrel"/>
</dbReference>
<dbReference type="NCBIfam" id="NF001273">
    <property type="entry name" value="PRK00230.1"/>
    <property type="match status" value="1"/>
</dbReference>
<dbReference type="NCBIfam" id="TIGR01740">
    <property type="entry name" value="pyrF"/>
    <property type="match status" value="1"/>
</dbReference>
<dbReference type="PANTHER" id="PTHR32119">
    <property type="entry name" value="OROTIDINE 5'-PHOSPHATE DECARBOXYLASE"/>
    <property type="match status" value="1"/>
</dbReference>
<dbReference type="PANTHER" id="PTHR32119:SF2">
    <property type="entry name" value="OROTIDINE 5'-PHOSPHATE DECARBOXYLASE"/>
    <property type="match status" value="1"/>
</dbReference>
<dbReference type="Pfam" id="PF00215">
    <property type="entry name" value="OMPdecase"/>
    <property type="match status" value="1"/>
</dbReference>
<dbReference type="SMART" id="SM00934">
    <property type="entry name" value="OMPdecase"/>
    <property type="match status" value="1"/>
</dbReference>
<dbReference type="SUPFAM" id="SSF51366">
    <property type="entry name" value="Ribulose-phoshate binding barrel"/>
    <property type="match status" value="1"/>
</dbReference>
<dbReference type="PROSITE" id="PS00156">
    <property type="entry name" value="OMPDECASE"/>
    <property type="match status" value="1"/>
</dbReference>
<reference key="1">
    <citation type="submission" date="2009-04" db="EMBL/GenBank/DDBJ databases">
        <title>Genome sequence of Bacillus anthracis A0248.</title>
        <authorList>
            <person name="Dodson R.J."/>
            <person name="Munk A.C."/>
            <person name="Bruce D."/>
            <person name="Detter C."/>
            <person name="Tapia R."/>
            <person name="Sutton G."/>
            <person name="Sims D."/>
            <person name="Brettin T."/>
        </authorList>
    </citation>
    <scope>NUCLEOTIDE SEQUENCE [LARGE SCALE GENOMIC DNA]</scope>
    <source>
        <strain>A0248</strain>
    </source>
</reference>
<gene>
    <name evidence="1" type="primary">pyrF</name>
    <name type="ordered locus">BAA_4045</name>
</gene>
<protein>
    <recommendedName>
        <fullName evidence="1">Orotidine 5'-phosphate decarboxylase</fullName>
        <ecNumber evidence="1">4.1.1.23</ecNumber>
    </recommendedName>
    <alternativeName>
        <fullName evidence="1">OMP decarboxylase</fullName>
        <shortName evidence="1">OMPDCase</shortName>
        <shortName evidence="1">OMPdecase</shortName>
    </alternativeName>
</protein>
<comment type="function">
    <text evidence="1">Catalyzes the decarboxylation of orotidine 5'-monophosphate (OMP) to uridine 5'-monophosphate (UMP).</text>
</comment>
<comment type="catalytic activity">
    <reaction evidence="1">
        <text>orotidine 5'-phosphate + H(+) = UMP + CO2</text>
        <dbReference type="Rhea" id="RHEA:11596"/>
        <dbReference type="ChEBI" id="CHEBI:15378"/>
        <dbReference type="ChEBI" id="CHEBI:16526"/>
        <dbReference type="ChEBI" id="CHEBI:57538"/>
        <dbReference type="ChEBI" id="CHEBI:57865"/>
        <dbReference type="EC" id="4.1.1.23"/>
    </reaction>
</comment>
<comment type="pathway">
    <text evidence="1">Pyrimidine metabolism; UMP biosynthesis via de novo pathway; UMP from orotate: step 2/2.</text>
</comment>
<comment type="subunit">
    <text evidence="1">Homodimer.</text>
</comment>
<comment type="similarity">
    <text evidence="1">Belongs to the OMP decarboxylase family. Type 1 subfamily.</text>
</comment>
<accession>C3P653</accession>